<organism>
    <name type="scientific">Pisum sativum</name>
    <name type="common">Garden pea</name>
    <name type="synonym">Lathyrus oleraceus</name>
    <dbReference type="NCBI Taxonomy" id="3888"/>
    <lineage>
        <taxon>Eukaryota</taxon>
        <taxon>Viridiplantae</taxon>
        <taxon>Streptophyta</taxon>
        <taxon>Embryophyta</taxon>
        <taxon>Tracheophyta</taxon>
        <taxon>Spermatophyta</taxon>
        <taxon>Magnoliopsida</taxon>
        <taxon>eudicotyledons</taxon>
        <taxon>Gunneridae</taxon>
        <taxon>Pentapetalae</taxon>
        <taxon>rosids</taxon>
        <taxon>fabids</taxon>
        <taxon>Fabales</taxon>
        <taxon>Fabaceae</taxon>
        <taxon>Papilionoideae</taxon>
        <taxon>50 kb inversion clade</taxon>
        <taxon>NPAAA clade</taxon>
        <taxon>Hologalegina</taxon>
        <taxon>IRL clade</taxon>
        <taxon>Fabeae</taxon>
        <taxon>Pisum</taxon>
    </lineage>
</organism>
<dbReference type="EMBL" id="AJ574794">
    <property type="protein sequence ID" value="CAE00466.1"/>
    <property type="molecule type" value="Genomic_DNA"/>
</dbReference>
<dbReference type="EnsemblPlants" id="Psat1g073800.1">
    <property type="protein sequence ID" value="Psat1g073800.1.cds"/>
    <property type="gene ID" value="Psat1g073800"/>
</dbReference>
<dbReference type="Gramene" id="Psat1g073800.1">
    <property type="protein sequence ID" value="Psat1g073800.1.cds"/>
    <property type="gene ID" value="Psat1g073800"/>
</dbReference>
<dbReference type="GO" id="GO:0045735">
    <property type="term" value="F:nutrient reservoir activity"/>
    <property type="evidence" value="ECO:0007669"/>
    <property type="project" value="UniProtKB-KW"/>
</dbReference>
<dbReference type="GO" id="GO:0090729">
    <property type="term" value="F:toxin activity"/>
    <property type="evidence" value="ECO:0007669"/>
    <property type="project" value="UniProtKB-KW"/>
</dbReference>
<dbReference type="InterPro" id="IPR012512">
    <property type="entry name" value="Albumin_I"/>
</dbReference>
<dbReference type="InterPro" id="IPR032000">
    <property type="entry name" value="Albumin_I_a"/>
</dbReference>
<dbReference type="Pfam" id="PF08027">
    <property type="entry name" value="Albumin_I"/>
    <property type="match status" value="1"/>
</dbReference>
<dbReference type="Pfam" id="PF16720">
    <property type="entry name" value="Albumin_I_a"/>
    <property type="match status" value="1"/>
</dbReference>
<dbReference type="SUPFAM" id="SSF57059">
    <property type="entry name" value="omega toxin-like"/>
    <property type="match status" value="1"/>
</dbReference>
<comment type="function">
    <text evidence="1">PA1b binds to basic 7S globulin (BG) and stimulates its phosphorylation activity. Involved in the signal transduction system to regulate the growth and differentiation as a hormone peptide. Toxic to various insects through binding to a high affinity binding site in the insect gut (By similarity).</text>
</comment>
<comment type="tissue specificity">
    <text evidence="3">Major component of both the cotyledons and embryonic axes of mature seeds.</text>
</comment>
<comment type="developmental stage">
    <text evidence="3">Increasing expression during seed development followed by a rapid degradation during the first days of seed germination.</text>
</comment>
<comment type="domain">
    <text evidence="1">The presence of a 'disulfide through disulfide knot' structurally defines this protein as a knottin.</text>
</comment>
<comment type="PTM">
    <text>The C-terminal glycine may be removed from PA1b.</text>
</comment>
<comment type="miscellaneous">
    <text>The protein sequenced in PubMed:3755437 was probably a mixture of the products of genes C and D, PA1b being of C origin while PA1a is of D origin.</text>
</comment>
<evidence type="ECO:0000250" key="1"/>
<evidence type="ECO:0000255" key="2"/>
<evidence type="ECO:0000269" key="3">
    <source>
    </source>
</evidence>
<proteinExistence type="evidence at protein level"/>
<protein>
    <recommendedName>
        <fullName>Albumin-1 D</fullName>
    </recommendedName>
    <alternativeName>
        <fullName>PA1 D</fullName>
    </alternativeName>
    <alternativeName>
        <fullName>PsaA1b012</fullName>
    </alternativeName>
    <component>
        <recommendedName>
            <fullName>Albumin-1 D chain b</fullName>
        </recommendedName>
        <alternativeName>
            <fullName>Leginsulin D</fullName>
        </alternativeName>
        <alternativeName>
            <fullName>PA1b D</fullName>
        </alternativeName>
    </component>
    <component>
        <recommendedName>
            <fullName>Albumin-1 D chain a</fullName>
        </recommendedName>
        <alternativeName>
            <fullName>PA1a D</fullName>
        </alternativeName>
    </component>
</protein>
<reference key="1">
    <citation type="journal article" date="2004" name="Plant Sci.">
        <title>Molecular and biological screening for insect-toxic seed albumins from four legume species.</title>
        <authorList>
            <person name="Louis S."/>
            <person name="Delobel B."/>
            <person name="Gressent F."/>
            <person name="Rahioui I."/>
            <person name="Quillien L."/>
            <person name="Vallier A."/>
            <person name="Rahbe Y."/>
        </authorList>
        <dbReference type="AGRICOLA" id="IND43645431"/>
    </citation>
    <scope>NUCLEOTIDE SEQUENCE [GENOMIC DNA]</scope>
    <source>
        <strain>cv. Frisson</strain>
        <tissue>Seed</tissue>
    </source>
</reference>
<reference key="2">
    <citation type="journal article" date="1986" name="J. Biol. Chem.">
        <title>Gene structure, protein structure, and regulation of the synthesis of a sulfur-rich protein in pea seeds.</title>
        <authorList>
            <person name="Higgins T.J.V."/>
            <person name="Chandler P.M."/>
            <person name="Randall P.J."/>
            <person name="Spencer D."/>
            <person name="Beach L.R."/>
            <person name="Blagrove R.J."/>
            <person name="Kortt A.A."/>
            <person name="Inglis A.S."/>
        </authorList>
    </citation>
    <scope>PROTEIN SEQUENCE OF 70-122</scope>
    <scope>DEVELOPMENTAL STAGE</scope>
    <scope>TISSUE SPECIFICITY</scope>
    <source>
        <tissue>Seed</tissue>
    </source>
</reference>
<sequence>MASVKLASLIVLFATLGMFLTKNVGAASCNGVCSPFEMPPCGTSACRCIPVGLFIGYCRNPSGVFLKANDEHPNLCESDADCRKKGSGNFCGHYPNPDIEYGWCFASKSEAEDFFSKITPKDLLKSVSTA</sequence>
<feature type="signal peptide" evidence="2">
    <location>
        <begin position="1"/>
        <end position="26"/>
    </location>
</feature>
<feature type="chain" id="PRO_0000032227" description="Albumin-1 D chain b">
    <location>
        <begin position="27"/>
        <end position="63"/>
    </location>
</feature>
<feature type="propeptide" id="PRO_0000032228" evidence="3">
    <location>
        <begin position="64"/>
        <end position="69"/>
    </location>
</feature>
<feature type="chain" id="PRO_0000032229" description="Albumin-1 D chain a">
    <location>
        <begin position="70"/>
        <end position="122"/>
    </location>
</feature>
<feature type="propeptide" id="PRO_0000032230">
    <location>
        <begin position="123"/>
        <end position="130"/>
    </location>
</feature>
<feature type="disulfide bond" evidence="1">
    <location>
        <begin position="29"/>
        <end position="46"/>
    </location>
</feature>
<feature type="disulfide bond" evidence="1">
    <location>
        <begin position="33"/>
        <end position="48"/>
    </location>
</feature>
<feature type="disulfide bond" evidence="1">
    <location>
        <begin position="41"/>
        <end position="58"/>
    </location>
</feature>
<accession>P62929</accession>
<accession>P08687</accession>
<accession>Q40999</accession>
<accession>Q7XTK6</accession>
<accession>Q9M3X4</accession>
<name>ALB1D_PEA</name>
<keyword id="KW-0903">Direct protein sequencing</keyword>
<keyword id="KW-1015">Disulfide bond</keyword>
<keyword id="KW-0960">Knottin</keyword>
<keyword id="KW-0708">Seed storage protein</keyword>
<keyword id="KW-0732">Signal</keyword>
<keyword id="KW-0758">Storage protein</keyword>
<keyword id="KW-0800">Toxin</keyword>